<gene>
    <name evidence="1" type="primary">rpoZ</name>
    <name type="ordered locus">Sputcn32_3631</name>
</gene>
<sequence>MARVTVEDAVEQIGNRFDMILVAARRARQIAVQGKDPMVEEMNDKPTVIALREIELGLVNAHTLDADERQTVREREAAEIAAVAAIAEGRSL</sequence>
<comment type="function">
    <text evidence="1">Promotes RNA polymerase assembly. Latches the N- and C-terminal regions of the beta' subunit thereby facilitating its interaction with the beta and alpha subunits.</text>
</comment>
<comment type="catalytic activity">
    <reaction evidence="1">
        <text>RNA(n) + a ribonucleoside 5'-triphosphate = RNA(n+1) + diphosphate</text>
        <dbReference type="Rhea" id="RHEA:21248"/>
        <dbReference type="Rhea" id="RHEA-COMP:14527"/>
        <dbReference type="Rhea" id="RHEA-COMP:17342"/>
        <dbReference type="ChEBI" id="CHEBI:33019"/>
        <dbReference type="ChEBI" id="CHEBI:61557"/>
        <dbReference type="ChEBI" id="CHEBI:140395"/>
        <dbReference type="EC" id="2.7.7.6"/>
    </reaction>
</comment>
<comment type="subunit">
    <text evidence="1">The RNAP catalytic core consists of 2 alpha, 1 beta, 1 beta' and 1 omega subunit. When a sigma factor is associated with the core the holoenzyme is formed, which can initiate transcription.</text>
</comment>
<comment type="similarity">
    <text evidence="1">Belongs to the RNA polymerase subunit omega family.</text>
</comment>
<accession>A4YBK6</accession>
<dbReference type="EC" id="2.7.7.6" evidence="1"/>
<dbReference type="EMBL" id="CP000681">
    <property type="protein sequence ID" value="ABP77339.1"/>
    <property type="molecule type" value="Genomic_DNA"/>
</dbReference>
<dbReference type="SMR" id="A4YBK6"/>
<dbReference type="STRING" id="319224.Sputcn32_3631"/>
<dbReference type="KEGG" id="spc:Sputcn32_3631"/>
<dbReference type="eggNOG" id="COG1758">
    <property type="taxonomic scope" value="Bacteria"/>
</dbReference>
<dbReference type="HOGENOM" id="CLU_125406_5_3_6"/>
<dbReference type="GO" id="GO:0000428">
    <property type="term" value="C:DNA-directed RNA polymerase complex"/>
    <property type="evidence" value="ECO:0007669"/>
    <property type="project" value="UniProtKB-KW"/>
</dbReference>
<dbReference type="GO" id="GO:0003677">
    <property type="term" value="F:DNA binding"/>
    <property type="evidence" value="ECO:0007669"/>
    <property type="project" value="UniProtKB-UniRule"/>
</dbReference>
<dbReference type="GO" id="GO:0003899">
    <property type="term" value="F:DNA-directed RNA polymerase activity"/>
    <property type="evidence" value="ECO:0007669"/>
    <property type="project" value="UniProtKB-UniRule"/>
</dbReference>
<dbReference type="GO" id="GO:0006351">
    <property type="term" value="P:DNA-templated transcription"/>
    <property type="evidence" value="ECO:0007669"/>
    <property type="project" value="UniProtKB-UniRule"/>
</dbReference>
<dbReference type="Gene3D" id="3.90.940.10">
    <property type="match status" value="1"/>
</dbReference>
<dbReference type="HAMAP" id="MF_00366">
    <property type="entry name" value="RNApol_bact_RpoZ"/>
    <property type="match status" value="1"/>
</dbReference>
<dbReference type="InterPro" id="IPR003716">
    <property type="entry name" value="DNA-dir_RNA_pol_omega"/>
</dbReference>
<dbReference type="InterPro" id="IPR006110">
    <property type="entry name" value="Pol_omega/Rpo6/RPB6"/>
</dbReference>
<dbReference type="InterPro" id="IPR036161">
    <property type="entry name" value="RPB6/omega-like_sf"/>
</dbReference>
<dbReference type="NCBIfam" id="TIGR00690">
    <property type="entry name" value="rpoZ"/>
    <property type="match status" value="1"/>
</dbReference>
<dbReference type="PANTHER" id="PTHR34476">
    <property type="entry name" value="DNA-DIRECTED RNA POLYMERASE SUBUNIT OMEGA"/>
    <property type="match status" value="1"/>
</dbReference>
<dbReference type="PANTHER" id="PTHR34476:SF1">
    <property type="entry name" value="DNA-DIRECTED RNA POLYMERASE SUBUNIT OMEGA"/>
    <property type="match status" value="1"/>
</dbReference>
<dbReference type="Pfam" id="PF01192">
    <property type="entry name" value="RNA_pol_Rpb6"/>
    <property type="match status" value="1"/>
</dbReference>
<dbReference type="SMART" id="SM01409">
    <property type="entry name" value="RNA_pol_Rpb6"/>
    <property type="match status" value="1"/>
</dbReference>
<dbReference type="SUPFAM" id="SSF63562">
    <property type="entry name" value="RPB6/omega subunit-like"/>
    <property type="match status" value="1"/>
</dbReference>
<protein>
    <recommendedName>
        <fullName evidence="1">DNA-directed RNA polymerase subunit omega</fullName>
        <shortName evidence="1">RNAP omega subunit</shortName>
        <ecNumber evidence="1">2.7.7.6</ecNumber>
    </recommendedName>
    <alternativeName>
        <fullName evidence="1">RNA polymerase omega subunit</fullName>
    </alternativeName>
    <alternativeName>
        <fullName evidence="1">Transcriptase subunit omega</fullName>
    </alternativeName>
</protein>
<evidence type="ECO:0000255" key="1">
    <source>
        <dbReference type="HAMAP-Rule" id="MF_00366"/>
    </source>
</evidence>
<feature type="chain" id="PRO_1000006012" description="DNA-directed RNA polymerase subunit omega">
    <location>
        <begin position="1"/>
        <end position="92"/>
    </location>
</feature>
<reference key="1">
    <citation type="submission" date="2007-04" db="EMBL/GenBank/DDBJ databases">
        <title>Complete sequence of Shewanella putrefaciens CN-32.</title>
        <authorList>
            <consortium name="US DOE Joint Genome Institute"/>
            <person name="Copeland A."/>
            <person name="Lucas S."/>
            <person name="Lapidus A."/>
            <person name="Barry K."/>
            <person name="Detter J.C."/>
            <person name="Glavina del Rio T."/>
            <person name="Hammon N."/>
            <person name="Israni S."/>
            <person name="Dalin E."/>
            <person name="Tice H."/>
            <person name="Pitluck S."/>
            <person name="Chain P."/>
            <person name="Malfatti S."/>
            <person name="Shin M."/>
            <person name="Vergez L."/>
            <person name="Schmutz J."/>
            <person name="Larimer F."/>
            <person name="Land M."/>
            <person name="Hauser L."/>
            <person name="Kyrpides N."/>
            <person name="Mikhailova N."/>
            <person name="Romine M.F."/>
            <person name="Fredrickson J."/>
            <person name="Tiedje J."/>
            <person name="Richardson P."/>
        </authorList>
    </citation>
    <scope>NUCLEOTIDE SEQUENCE [LARGE SCALE GENOMIC DNA]</scope>
    <source>
        <strain>CN-32 / ATCC BAA-453</strain>
    </source>
</reference>
<name>RPOZ_SHEPC</name>
<proteinExistence type="inferred from homology"/>
<organism>
    <name type="scientific">Shewanella putrefaciens (strain CN-32 / ATCC BAA-453)</name>
    <dbReference type="NCBI Taxonomy" id="319224"/>
    <lineage>
        <taxon>Bacteria</taxon>
        <taxon>Pseudomonadati</taxon>
        <taxon>Pseudomonadota</taxon>
        <taxon>Gammaproteobacteria</taxon>
        <taxon>Alteromonadales</taxon>
        <taxon>Shewanellaceae</taxon>
        <taxon>Shewanella</taxon>
    </lineage>
</organism>
<keyword id="KW-0240">DNA-directed RNA polymerase</keyword>
<keyword id="KW-0548">Nucleotidyltransferase</keyword>
<keyword id="KW-0804">Transcription</keyword>
<keyword id="KW-0808">Transferase</keyword>